<gene>
    <name type="primary">HTA2</name>
    <name type="ORF">PGUG_03443</name>
</gene>
<comment type="function">
    <text>Core component of nucleosome which plays a central role in DNA double strand break (DSB) repair. Nucleosomes wrap and compact DNA into chromatin, limiting DNA accessibility to the cellular machineries which require DNA as a template. Histones thereby play a central role in transcription regulation, DNA repair, DNA replication and chromosomal stability. DNA accessibility is regulated via a complex set of post-translational modifications of histones, also called histone code, and nucleosome remodeling.</text>
</comment>
<comment type="subunit">
    <text>The nucleosome is a histone octamer containing two molecules each of H2A, H2B, H3 and H4 assembled in one H3-H4 heterotetramer and two H2A-H2B heterodimers. The octamer wraps approximately 147 bp of DNA.</text>
</comment>
<comment type="subcellular location">
    <subcellularLocation>
        <location>Nucleus</location>
    </subcellularLocation>
    <subcellularLocation>
        <location>Chromosome</location>
    </subcellularLocation>
</comment>
<comment type="domain">
    <text>The [ST]-Q motif constitutes a recognition sequence for kinases from the PI3/PI4-kinase family.</text>
</comment>
<comment type="PTM">
    <text evidence="1">Phosphorylated to form H2AS128ph (gamma-H2A) in response to DNA double-strand breaks (DSBs) generated by exogenous genotoxic agents and by stalled replication forks. Phosphorylation is dependent on the DNA damage checkpoint kinases MEC1/ATR and TEL1/ATM, spreads on either side of a detected DSB site and may mark the surrounding chromatin for recruitment of proteins required for DNA damage signaling and repair. Gamma-H2A is removed from the DNA prior to the strand invasion-primer extension step of the repair process and subsequently dephosphorylated. Dephosphorylation is necessary for efficient recovery from the DNA damage checkpoint (By similarity).</text>
</comment>
<comment type="PTM">
    <text evidence="1">Acetylated by ESA1 to form H2AK4ac and H2AK7ac.</text>
</comment>
<comment type="miscellaneous">
    <text evidence="2">In contrast to vertebrates and insects, its C-terminus is not monoubiquitinated.</text>
</comment>
<comment type="similarity">
    <text evidence="2">Belongs to the histone H2A family.</text>
</comment>
<comment type="caution">
    <text evidence="2">To ensure consistency between histone entries, we follow the 'Brno' nomenclature for histone modifications, with positions referring to those used in the literature for the 'closest' model organism. Due to slight variations in histone sequences between organisms and to the presence of initiator methionine in UniProtKB/Swiss-Prot sequences, the actual positions of modified amino acids in the sequence generally differ. In this entry the following conventions are used: H2AK4ac = acetylated Lys-4; H2AK7ac = acetylated Lys-6; H2AK126su = sumoylated Lys-125; H2AS128ph = phosphorylated Ser-127.</text>
</comment>
<evidence type="ECO:0000250" key="1"/>
<evidence type="ECO:0000305" key="2"/>
<sequence length="130" mass="13897">MSGKGKSAGADKASTSRSAKAGLTFPVGRIHRLLRKGNYAQRVGSGAPVYLTSVLEYLTAEILELAGNAARDNKKSRIIPRHLQLAIRNDEELNKLLGDVTIAQGGVLPNIHQNLLPKKSGKGDKASQEL</sequence>
<keyword id="KW-0007">Acetylation</keyword>
<keyword id="KW-0158">Chromosome</keyword>
<keyword id="KW-0227">DNA damage</keyword>
<keyword id="KW-0234">DNA repair</keyword>
<keyword id="KW-0238">DNA-binding</keyword>
<keyword id="KW-1017">Isopeptide bond</keyword>
<keyword id="KW-0488">Methylation</keyword>
<keyword id="KW-0544">Nucleosome core</keyword>
<keyword id="KW-0539">Nucleus</keyword>
<keyword id="KW-0597">Phosphoprotein</keyword>
<keyword id="KW-1185">Reference proteome</keyword>
<keyword id="KW-0832">Ubl conjugation</keyword>
<reference key="1">
    <citation type="journal article" date="2009" name="Nature">
        <title>Evolution of pathogenicity and sexual reproduction in eight Candida genomes.</title>
        <authorList>
            <person name="Butler G."/>
            <person name="Rasmussen M.D."/>
            <person name="Lin M.F."/>
            <person name="Santos M.A.S."/>
            <person name="Sakthikumar S."/>
            <person name="Munro C.A."/>
            <person name="Rheinbay E."/>
            <person name="Grabherr M."/>
            <person name="Forche A."/>
            <person name="Reedy J.L."/>
            <person name="Agrafioti I."/>
            <person name="Arnaud M.B."/>
            <person name="Bates S."/>
            <person name="Brown A.J.P."/>
            <person name="Brunke S."/>
            <person name="Costanzo M.C."/>
            <person name="Fitzpatrick D.A."/>
            <person name="de Groot P.W.J."/>
            <person name="Harris D."/>
            <person name="Hoyer L.L."/>
            <person name="Hube B."/>
            <person name="Klis F.M."/>
            <person name="Kodira C."/>
            <person name="Lennard N."/>
            <person name="Logue M.E."/>
            <person name="Martin R."/>
            <person name="Neiman A.M."/>
            <person name="Nikolaou E."/>
            <person name="Quail M.A."/>
            <person name="Quinn J."/>
            <person name="Santos M.C."/>
            <person name="Schmitzberger F.F."/>
            <person name="Sherlock G."/>
            <person name="Shah P."/>
            <person name="Silverstein K.A.T."/>
            <person name="Skrzypek M.S."/>
            <person name="Soll D."/>
            <person name="Staggs R."/>
            <person name="Stansfield I."/>
            <person name="Stumpf M.P.H."/>
            <person name="Sudbery P.E."/>
            <person name="Srikantha T."/>
            <person name="Zeng Q."/>
            <person name="Berman J."/>
            <person name="Berriman M."/>
            <person name="Heitman J."/>
            <person name="Gow N.A.R."/>
            <person name="Lorenz M.C."/>
            <person name="Birren B.W."/>
            <person name="Kellis M."/>
            <person name="Cuomo C.A."/>
        </authorList>
    </citation>
    <scope>NUCLEOTIDE SEQUENCE [LARGE SCALE GENOMIC DNA]</scope>
    <source>
        <strain>ATCC 6260 / CBS 566 / DSM 6381 / JCM 1539 / NBRC 10279 / NRRL Y-324</strain>
    </source>
</reference>
<organism>
    <name type="scientific">Meyerozyma guilliermondii (strain ATCC 6260 / CBS 566 / DSM 6381 / JCM 1539 / NBRC 10279 / NRRL Y-324)</name>
    <name type="common">Yeast</name>
    <name type="synonym">Candida guilliermondii</name>
    <dbReference type="NCBI Taxonomy" id="294746"/>
    <lineage>
        <taxon>Eukaryota</taxon>
        <taxon>Fungi</taxon>
        <taxon>Dikarya</taxon>
        <taxon>Ascomycota</taxon>
        <taxon>Saccharomycotina</taxon>
        <taxon>Pichiomycetes</taxon>
        <taxon>Debaryomycetaceae</taxon>
        <taxon>Meyerozyma</taxon>
    </lineage>
</organism>
<protein>
    <recommendedName>
        <fullName>Histone H2A.2</fullName>
    </recommendedName>
</protein>
<accession>A5DJJ2</accession>
<feature type="initiator methionine" description="Removed" evidence="1">
    <location>
        <position position="1"/>
    </location>
</feature>
<feature type="chain" id="PRO_0000297739" description="Histone H2A.2">
    <location>
        <begin position="2"/>
        <end position="130"/>
    </location>
</feature>
<feature type="short sequence motif" description="[ST]-Q motif">
    <location>
        <begin position="127"/>
        <end position="128"/>
    </location>
</feature>
<feature type="site" description="Not ubiquitinated" evidence="2">
    <location>
        <position position="118"/>
    </location>
</feature>
<feature type="modified residue" description="N6-acetyllysine" evidence="1">
    <location>
        <position position="4"/>
    </location>
</feature>
<feature type="modified residue" description="N6-acetyllysine" evidence="1">
    <location>
        <position position="6"/>
    </location>
</feature>
<feature type="modified residue" description="N5-methylglutamine" evidence="1">
    <location>
        <position position="104"/>
    </location>
</feature>
<feature type="modified residue" description="Phosphoserine" evidence="1">
    <location>
        <position position="127"/>
    </location>
</feature>
<feature type="cross-link" description="Glycyl lysine isopeptide (Lys-Gly) (interchain with G-Cter in SUMO)" evidence="1">
    <location>
        <position position="125"/>
    </location>
</feature>
<dbReference type="EMBL" id="CH408158">
    <property type="protein sequence ID" value="EDK39345.1"/>
    <property type="molecule type" value="Genomic_DNA"/>
</dbReference>
<dbReference type="RefSeq" id="XP_001484062.1">
    <property type="nucleotide sequence ID" value="XM_001484012.1"/>
</dbReference>
<dbReference type="SMR" id="A5DJJ2"/>
<dbReference type="FunCoup" id="A5DJJ2">
    <property type="interactions" value="1093"/>
</dbReference>
<dbReference type="STRING" id="294746.A5DJJ2"/>
<dbReference type="GeneID" id="5126026"/>
<dbReference type="KEGG" id="pgu:PGUG_03443"/>
<dbReference type="VEuPathDB" id="FungiDB:PGUG_03443"/>
<dbReference type="eggNOG" id="KOG1756">
    <property type="taxonomic scope" value="Eukaryota"/>
</dbReference>
<dbReference type="HOGENOM" id="CLU_062828_3_1_1"/>
<dbReference type="InParanoid" id="A5DJJ2"/>
<dbReference type="OMA" id="ANEMFIN"/>
<dbReference type="OrthoDB" id="9421954at2759"/>
<dbReference type="Proteomes" id="UP000001997">
    <property type="component" value="Unassembled WGS sequence"/>
</dbReference>
<dbReference type="GO" id="GO:0000786">
    <property type="term" value="C:nucleosome"/>
    <property type="evidence" value="ECO:0007669"/>
    <property type="project" value="UniProtKB-KW"/>
</dbReference>
<dbReference type="GO" id="GO:0005634">
    <property type="term" value="C:nucleus"/>
    <property type="evidence" value="ECO:0007669"/>
    <property type="project" value="UniProtKB-SubCell"/>
</dbReference>
<dbReference type="GO" id="GO:0003677">
    <property type="term" value="F:DNA binding"/>
    <property type="evidence" value="ECO:0007669"/>
    <property type="project" value="UniProtKB-KW"/>
</dbReference>
<dbReference type="GO" id="GO:0046982">
    <property type="term" value="F:protein heterodimerization activity"/>
    <property type="evidence" value="ECO:0007669"/>
    <property type="project" value="InterPro"/>
</dbReference>
<dbReference type="GO" id="GO:0030527">
    <property type="term" value="F:structural constituent of chromatin"/>
    <property type="evidence" value="ECO:0007669"/>
    <property type="project" value="InterPro"/>
</dbReference>
<dbReference type="GO" id="GO:0006281">
    <property type="term" value="P:DNA repair"/>
    <property type="evidence" value="ECO:0007669"/>
    <property type="project" value="UniProtKB-KW"/>
</dbReference>
<dbReference type="CDD" id="cd00074">
    <property type="entry name" value="HFD_H2A"/>
    <property type="match status" value="1"/>
</dbReference>
<dbReference type="FunFam" id="1.10.20.10:FF:000008">
    <property type="entry name" value="Histone H2A"/>
    <property type="match status" value="1"/>
</dbReference>
<dbReference type="Gene3D" id="1.10.20.10">
    <property type="entry name" value="Histone, subunit A"/>
    <property type="match status" value="1"/>
</dbReference>
<dbReference type="InterPro" id="IPR009072">
    <property type="entry name" value="Histone-fold"/>
</dbReference>
<dbReference type="InterPro" id="IPR002119">
    <property type="entry name" value="Histone_H2A"/>
</dbReference>
<dbReference type="InterPro" id="IPR007125">
    <property type="entry name" value="Histone_H2A/H2B/H3"/>
</dbReference>
<dbReference type="InterPro" id="IPR032454">
    <property type="entry name" value="Histone_H2A_C"/>
</dbReference>
<dbReference type="InterPro" id="IPR032458">
    <property type="entry name" value="Histone_H2A_CS"/>
</dbReference>
<dbReference type="PANTHER" id="PTHR23430">
    <property type="entry name" value="HISTONE H2A"/>
    <property type="match status" value="1"/>
</dbReference>
<dbReference type="Pfam" id="PF00125">
    <property type="entry name" value="Histone"/>
    <property type="match status" value="1"/>
</dbReference>
<dbReference type="Pfam" id="PF16211">
    <property type="entry name" value="Histone_H2A_C"/>
    <property type="match status" value="1"/>
</dbReference>
<dbReference type="PRINTS" id="PR00620">
    <property type="entry name" value="HISTONEH2A"/>
</dbReference>
<dbReference type="SMART" id="SM00414">
    <property type="entry name" value="H2A"/>
    <property type="match status" value="1"/>
</dbReference>
<dbReference type="SUPFAM" id="SSF47113">
    <property type="entry name" value="Histone-fold"/>
    <property type="match status" value="1"/>
</dbReference>
<dbReference type="PROSITE" id="PS00046">
    <property type="entry name" value="HISTONE_H2A"/>
    <property type="match status" value="1"/>
</dbReference>
<name>H2A2_PICGU</name>
<proteinExistence type="inferred from homology"/>